<dbReference type="EMBL" id="AB005238">
    <property type="protein sequence ID" value="BAB10517.1"/>
    <property type="status" value="ALT_SEQ"/>
    <property type="molecule type" value="Genomic_DNA"/>
</dbReference>
<dbReference type="EMBL" id="CP002688">
    <property type="protein sequence ID" value="AED92410.1"/>
    <property type="molecule type" value="Genomic_DNA"/>
</dbReference>
<dbReference type="EMBL" id="AF378860">
    <property type="protein sequence ID" value="AAK55663.1"/>
    <property type="status" value="ALT_INIT"/>
    <property type="molecule type" value="mRNA"/>
</dbReference>
<dbReference type="EMBL" id="AY050467">
    <property type="protein sequence ID" value="AAK91480.1"/>
    <property type="molecule type" value="mRNA"/>
</dbReference>
<dbReference type="RefSeq" id="NP_568344.2">
    <property type="nucleotide sequence ID" value="NM_121736.3"/>
</dbReference>
<dbReference type="SMR" id="F4KGY6"/>
<dbReference type="BioGRID" id="16871">
    <property type="interactions" value="51"/>
</dbReference>
<dbReference type="FunCoup" id="F4KGY6">
    <property type="interactions" value="130"/>
</dbReference>
<dbReference type="IntAct" id="F4KGY6">
    <property type="interactions" value="44"/>
</dbReference>
<dbReference type="STRING" id="3702.F4KGY6"/>
<dbReference type="PaxDb" id="3702-AT5G17300.1"/>
<dbReference type="ProteomicsDB" id="228042"/>
<dbReference type="EnsemblPlants" id="AT5G17300.1">
    <property type="protein sequence ID" value="AT5G17300.1"/>
    <property type="gene ID" value="AT5G17300"/>
</dbReference>
<dbReference type="GeneID" id="831595"/>
<dbReference type="Gramene" id="AT5G17300.1">
    <property type="protein sequence ID" value="AT5G17300.1"/>
    <property type="gene ID" value="AT5G17300"/>
</dbReference>
<dbReference type="KEGG" id="ath:AT5G17300"/>
<dbReference type="Araport" id="AT5G17300"/>
<dbReference type="TAIR" id="AT5G17300">
    <property type="gene designation" value="RVE1"/>
</dbReference>
<dbReference type="eggNOG" id="KOG0724">
    <property type="taxonomic scope" value="Eukaryota"/>
</dbReference>
<dbReference type="HOGENOM" id="CLU_030536_0_0_1"/>
<dbReference type="InParanoid" id="F4KGY6"/>
<dbReference type="PRO" id="PR:F4KGY6"/>
<dbReference type="Proteomes" id="UP000006548">
    <property type="component" value="Chromosome 5"/>
</dbReference>
<dbReference type="ExpressionAtlas" id="F4KGY6">
    <property type="expression patterns" value="baseline and differential"/>
</dbReference>
<dbReference type="GO" id="GO:0005634">
    <property type="term" value="C:nucleus"/>
    <property type="evidence" value="ECO:0007669"/>
    <property type="project" value="UniProtKB-SubCell"/>
</dbReference>
<dbReference type="GO" id="GO:0003677">
    <property type="term" value="F:DNA binding"/>
    <property type="evidence" value="ECO:0000314"/>
    <property type="project" value="TAIR"/>
</dbReference>
<dbReference type="GO" id="GO:0003700">
    <property type="term" value="F:DNA-binding transcription factor activity"/>
    <property type="evidence" value="ECO:0000315"/>
    <property type="project" value="TAIR"/>
</dbReference>
<dbReference type="GO" id="GO:0009734">
    <property type="term" value="P:auxin-activated signaling pathway"/>
    <property type="evidence" value="ECO:0000315"/>
    <property type="project" value="TAIR"/>
</dbReference>
<dbReference type="GO" id="GO:0007623">
    <property type="term" value="P:circadian rhythm"/>
    <property type="evidence" value="ECO:0000270"/>
    <property type="project" value="TAIR"/>
</dbReference>
<dbReference type="GO" id="GO:0010600">
    <property type="term" value="P:regulation of auxin biosynthetic process"/>
    <property type="evidence" value="ECO:0000315"/>
    <property type="project" value="TAIR"/>
</dbReference>
<dbReference type="GO" id="GO:0006355">
    <property type="term" value="P:regulation of DNA-templated transcription"/>
    <property type="evidence" value="ECO:0000304"/>
    <property type="project" value="TAIR"/>
</dbReference>
<dbReference type="CDD" id="cd00167">
    <property type="entry name" value="SANT"/>
    <property type="match status" value="1"/>
</dbReference>
<dbReference type="FunFam" id="1.10.10.60:FF:000023">
    <property type="entry name" value="protein REVEILLE 6 isoform X1"/>
    <property type="match status" value="1"/>
</dbReference>
<dbReference type="Gene3D" id="1.10.10.60">
    <property type="entry name" value="Homeodomain-like"/>
    <property type="match status" value="1"/>
</dbReference>
<dbReference type="InterPro" id="IPR009057">
    <property type="entry name" value="Homeodomain-like_sf"/>
</dbReference>
<dbReference type="InterPro" id="IPR017930">
    <property type="entry name" value="Myb_dom"/>
</dbReference>
<dbReference type="InterPro" id="IPR006447">
    <property type="entry name" value="Myb_dom_plants"/>
</dbReference>
<dbReference type="InterPro" id="IPR001005">
    <property type="entry name" value="SANT/Myb"/>
</dbReference>
<dbReference type="InterPro" id="IPR017884">
    <property type="entry name" value="SANT_dom"/>
</dbReference>
<dbReference type="NCBIfam" id="TIGR01557">
    <property type="entry name" value="myb_SHAQKYF"/>
    <property type="match status" value="1"/>
</dbReference>
<dbReference type="PANTHER" id="PTHR12802:SF155">
    <property type="entry name" value="DEUBIQUITINASE MYSM1"/>
    <property type="match status" value="1"/>
</dbReference>
<dbReference type="PANTHER" id="PTHR12802">
    <property type="entry name" value="SWI/SNF COMPLEX-RELATED"/>
    <property type="match status" value="1"/>
</dbReference>
<dbReference type="Pfam" id="PF00249">
    <property type="entry name" value="Myb_DNA-binding"/>
    <property type="match status" value="1"/>
</dbReference>
<dbReference type="SMART" id="SM00717">
    <property type="entry name" value="SANT"/>
    <property type="match status" value="1"/>
</dbReference>
<dbReference type="SUPFAM" id="SSF46689">
    <property type="entry name" value="Homeodomain-like"/>
    <property type="match status" value="1"/>
</dbReference>
<dbReference type="PROSITE" id="PS51294">
    <property type="entry name" value="HTH_MYB"/>
    <property type="match status" value="1"/>
</dbReference>
<accession>F4KGY6</accession>
<accession>Q93WC6</accession>
<accession>Q9FFI1</accession>
<sequence length="387" mass="42981">MASSPLTANVQGTNASLRNRDEETADKQIQFNDQSFGGNDYAPKVRKPYTITKERERWTDEEHKKFVEALKLYGRAWRRIEEHVGSKTAVQIRSHAQKFFSKVAREATGGDGSSVEPIVIPPPRPKRKPAHPYPRKFGNEADQTSRSVSPSERDTQSPTSVLSTVGSEALCSLDSSSPNRSLSPVSSASPPAALTTTANAPEELETLKLELFPSERLLNRESSIKEPTKQSLKLFGKTVLVSDSGMSSSLTTSTYCKSPIQPLPRKLSSSKTLPIIRNSQEELLSCWIQVPLKQEDVENRCLDSGKAVQNEGSSTGSNTGSVDDTGHTEKTTEPETMLCQWEFKPSERSAFSELRRTNSESNSRGFGPYKKRKMVTEEEEHEIHLHL</sequence>
<name>RVE1_ARATH</name>
<protein>
    <recommendedName>
        <fullName>Protein REVEILLE 1</fullName>
    </recommendedName>
</protein>
<evidence type="ECO:0000255" key="1">
    <source>
        <dbReference type="PROSITE-ProRule" id="PRU00625"/>
    </source>
</evidence>
<evidence type="ECO:0000256" key="2">
    <source>
        <dbReference type="SAM" id="MobiDB-lite"/>
    </source>
</evidence>
<evidence type="ECO:0000269" key="3">
    <source>
    </source>
</evidence>
<evidence type="ECO:0000269" key="4">
    <source>
    </source>
</evidence>
<evidence type="ECO:0000305" key="5"/>
<reference key="1">
    <citation type="journal article" date="1997" name="DNA Res.">
        <title>Structural analysis of Arabidopsis thaliana chromosome 5. I. Sequence features of the 1.6 Mb regions covered by twenty physically assigned P1 clones.</title>
        <authorList>
            <person name="Sato S."/>
            <person name="Kotani H."/>
            <person name="Nakamura Y."/>
            <person name="Kaneko T."/>
            <person name="Asamizu E."/>
            <person name="Fukami M."/>
            <person name="Miyajima N."/>
            <person name="Tabata S."/>
        </authorList>
    </citation>
    <scope>NUCLEOTIDE SEQUENCE [LARGE SCALE GENOMIC DNA]</scope>
    <source>
        <strain>cv. Columbia</strain>
    </source>
</reference>
<reference key="2">
    <citation type="journal article" date="2017" name="Plant J.">
        <title>Araport11: a complete reannotation of the Arabidopsis thaliana reference genome.</title>
        <authorList>
            <person name="Cheng C.Y."/>
            <person name="Krishnakumar V."/>
            <person name="Chan A.P."/>
            <person name="Thibaud-Nissen F."/>
            <person name="Schobel S."/>
            <person name="Town C.D."/>
        </authorList>
    </citation>
    <scope>GENOME REANNOTATION</scope>
    <source>
        <strain>cv. Columbia</strain>
    </source>
</reference>
<reference key="3">
    <citation type="journal article" date="2003" name="Science">
        <title>Empirical analysis of transcriptional activity in the Arabidopsis genome.</title>
        <authorList>
            <person name="Yamada K."/>
            <person name="Lim J."/>
            <person name="Dale J.M."/>
            <person name="Chen H."/>
            <person name="Shinn P."/>
            <person name="Palm C.J."/>
            <person name="Southwick A.M."/>
            <person name="Wu H.C."/>
            <person name="Kim C.J."/>
            <person name="Nguyen M."/>
            <person name="Pham P.K."/>
            <person name="Cheuk R.F."/>
            <person name="Karlin-Newmann G."/>
            <person name="Liu S.X."/>
            <person name="Lam B."/>
            <person name="Sakano H."/>
            <person name="Wu T."/>
            <person name="Yu G."/>
            <person name="Miranda M."/>
            <person name="Quach H.L."/>
            <person name="Tripp M."/>
            <person name="Chang C.H."/>
            <person name="Lee J.M."/>
            <person name="Toriumi M.J."/>
            <person name="Chan M.M."/>
            <person name="Tang C.C."/>
            <person name="Onodera C.S."/>
            <person name="Deng J.M."/>
            <person name="Akiyama K."/>
            <person name="Ansari Y."/>
            <person name="Arakawa T."/>
            <person name="Banh J."/>
            <person name="Banno F."/>
            <person name="Bowser L."/>
            <person name="Brooks S.Y."/>
            <person name="Carninci P."/>
            <person name="Chao Q."/>
            <person name="Choy N."/>
            <person name="Enju A."/>
            <person name="Goldsmith A.D."/>
            <person name="Gurjal M."/>
            <person name="Hansen N.F."/>
            <person name="Hayashizaki Y."/>
            <person name="Johnson-Hopson C."/>
            <person name="Hsuan V.W."/>
            <person name="Iida K."/>
            <person name="Karnes M."/>
            <person name="Khan S."/>
            <person name="Koesema E."/>
            <person name="Ishida J."/>
            <person name="Jiang P.X."/>
            <person name="Jones T."/>
            <person name="Kawai J."/>
            <person name="Kamiya A."/>
            <person name="Meyers C."/>
            <person name="Nakajima M."/>
            <person name="Narusaka M."/>
            <person name="Seki M."/>
            <person name="Sakurai T."/>
            <person name="Satou M."/>
            <person name="Tamse R."/>
            <person name="Vaysberg M."/>
            <person name="Wallender E.K."/>
            <person name="Wong C."/>
            <person name="Yamamura Y."/>
            <person name="Yuan S."/>
            <person name="Shinozaki K."/>
            <person name="Davis R.W."/>
            <person name="Theologis A."/>
            <person name="Ecker J.R."/>
        </authorList>
    </citation>
    <scope>NUCLEOTIDE SEQUENCE [LARGE SCALE MRNA] OF 107-387</scope>
    <source>
        <strain>cv. Columbia</strain>
    </source>
</reference>
<reference key="4">
    <citation type="journal article" date="2009" name="Proc. Natl. Acad. Sci. U.S.A.">
        <title>REVEILLE1, a Myb-like transcription factor, integrates the circadian clock and auxin pathways.</title>
        <authorList>
            <person name="Rawat R."/>
            <person name="Schwartz J."/>
            <person name="Jones M.A."/>
            <person name="Sairanen I."/>
            <person name="Cheng Y."/>
            <person name="Andersson C.R."/>
            <person name="Zhao Y."/>
            <person name="Ljung K."/>
            <person name="Harmer S.L."/>
        </authorList>
    </citation>
    <scope>FUNCTION</scope>
    <scope>INDUCTION</scope>
    <scope>DISRUPTION PHENOTYPE</scope>
    <scope>GENE FAMILY</scope>
    <scope>NOMENCLATURE</scope>
</reference>
<reference key="5">
    <citation type="journal article" date="2013" name="Plant Cell Environ.">
        <title>Mapping quantitative trait loci for freezing tolerance in a recombinant inbred line population of Arabidopsis thaliana accessions Tenela and C24 reveals REVEILLE1 as negative regulator of cold acclimation.</title>
        <authorList>
            <person name="Meissner M."/>
            <person name="Orsini E."/>
            <person name="Ruschhaupt M."/>
            <person name="Melchinger A.E."/>
            <person name="Hincha D.K."/>
            <person name="Heyer A.G."/>
        </authorList>
    </citation>
    <scope>FUNCTION</scope>
    <scope>INDUCTION BY COLD</scope>
    <scope>DISRUPTION PHENOTYPE</scope>
    <source>
        <strain>cv. Columbia</strain>
    </source>
</reference>
<feature type="chain" id="PRO_0000424835" description="Protein REVEILLE 1">
    <location>
        <begin position="1"/>
        <end position="387"/>
    </location>
</feature>
<feature type="domain" description="HTH myb-type" evidence="1">
    <location>
        <begin position="50"/>
        <end position="104"/>
    </location>
</feature>
<feature type="DNA-binding region" description="H-T-H motif" evidence="1">
    <location>
        <begin position="77"/>
        <end position="100"/>
    </location>
</feature>
<feature type="region of interest" description="Disordered" evidence="2">
    <location>
        <begin position="1"/>
        <end position="44"/>
    </location>
</feature>
<feature type="region of interest" description="Disordered" evidence="2">
    <location>
        <begin position="105"/>
        <end position="200"/>
    </location>
</feature>
<feature type="region of interest" description="Disordered" evidence="2">
    <location>
        <begin position="306"/>
        <end position="334"/>
    </location>
</feature>
<feature type="region of interest" description="Disordered" evidence="2">
    <location>
        <begin position="350"/>
        <end position="387"/>
    </location>
</feature>
<feature type="compositionally biased region" description="Polar residues" evidence="2">
    <location>
        <begin position="1"/>
        <end position="17"/>
    </location>
</feature>
<feature type="compositionally biased region" description="Polar residues" evidence="2">
    <location>
        <begin position="27"/>
        <end position="37"/>
    </location>
</feature>
<feature type="compositionally biased region" description="Basic residues" evidence="2">
    <location>
        <begin position="124"/>
        <end position="134"/>
    </location>
</feature>
<feature type="compositionally biased region" description="Polar residues" evidence="2">
    <location>
        <begin position="141"/>
        <end position="166"/>
    </location>
</feature>
<feature type="compositionally biased region" description="Low complexity" evidence="2">
    <location>
        <begin position="172"/>
        <end position="200"/>
    </location>
</feature>
<feature type="compositionally biased region" description="Low complexity" evidence="2">
    <location>
        <begin position="312"/>
        <end position="323"/>
    </location>
</feature>
<feature type="compositionally biased region" description="Basic and acidic residues" evidence="2">
    <location>
        <begin position="324"/>
        <end position="333"/>
    </location>
</feature>
<gene>
    <name type="primary">RVE1</name>
    <name type="ordered locus">At5g17300</name>
    <name type="ORF">MKP11.15</name>
</gene>
<proteinExistence type="evidence at protein level"/>
<organism>
    <name type="scientific">Arabidopsis thaliana</name>
    <name type="common">Mouse-ear cress</name>
    <dbReference type="NCBI Taxonomy" id="3702"/>
    <lineage>
        <taxon>Eukaryota</taxon>
        <taxon>Viridiplantae</taxon>
        <taxon>Streptophyta</taxon>
        <taxon>Embryophyta</taxon>
        <taxon>Tracheophyta</taxon>
        <taxon>Spermatophyta</taxon>
        <taxon>Magnoliopsida</taxon>
        <taxon>eudicotyledons</taxon>
        <taxon>Gunneridae</taxon>
        <taxon>Pentapetalae</taxon>
        <taxon>rosids</taxon>
        <taxon>malvids</taxon>
        <taxon>Brassicales</taxon>
        <taxon>Brassicaceae</taxon>
        <taxon>Camelineae</taxon>
        <taxon>Arabidopsis</taxon>
    </lineage>
</organism>
<keyword id="KW-0090">Biological rhythms</keyword>
<keyword id="KW-0238">DNA-binding</keyword>
<keyword id="KW-0539">Nucleus</keyword>
<keyword id="KW-1185">Reference proteome</keyword>
<keyword id="KW-0804">Transcription</keyword>
<keyword id="KW-0805">Transcription regulation</keyword>
<comment type="function">
    <text evidence="3 4">Morning-phased transcription factor integrating the circadian clock and auxin pathways. Binds to the evening element (EE) of promoters. Does not act within the central clock, but regulates free auxin levels in a time-of-day specific manner. Positively regulates the expression of YUC8 during the day, but has no effect during the night. Negative regulator of freezing tolerance.</text>
</comment>
<comment type="interaction">
    <interactant intactId="EBI-15194459">
        <id>F4KGY6</id>
    </interactant>
    <interactant intactId="EBI-395803">
        <id>Q9XGN1</id>
        <label>TTG1</label>
    </interactant>
    <organismsDiffer>false</organismsDiffer>
    <experiments>4</experiments>
</comment>
<comment type="subcellular location">
    <subcellularLocation>
        <location evidence="1">Nucleus</location>
    </subcellularLocation>
</comment>
<comment type="induction">
    <text evidence="3 4">Circadian-regulation. Peak of transcript abundance near subjective dawn. Down-regulated and strongly decreased amplitude of circadian oscillation upon cold treatment.</text>
</comment>
<comment type="disruption phenotype">
    <text evidence="3 4">No effect on the regulation of core clock associated genes, but shorter hypocotyl length and higher freezing tolerance. Rve1 and rve2 double mutant has no alteration in the period or phase of the clock. Rve1, rve2 and rve7 triple mutant has no alteration in the period or phase of the clock.</text>
</comment>
<comment type="sequence caution" evidence="5">
    <conflict type="erroneous initiation">
        <sequence resource="EMBL-CDS" id="AAK55663"/>
    </conflict>
    <text>Truncated N-terminus.</text>
</comment>
<comment type="sequence caution" evidence="5">
    <conflict type="erroneous gene model prediction">
        <sequence resource="EMBL-CDS" id="BAB10517"/>
    </conflict>
</comment>